<protein>
    <recommendedName>
        <fullName evidence="4">Low molecular weight phosphotyrosine protein phosphatase</fullName>
        <shortName evidence="4">PTPase</shortName>
        <ecNumber evidence="3">3.1.3.48</ecNumber>
    </recommendedName>
    <alternativeName>
        <fullName evidence="4">Low molecular weight cytosolic acid phosphatase</fullName>
        <ecNumber evidence="3">3.1.3.2</ecNumber>
    </alternativeName>
</protein>
<name>PPAL_YEAST</name>
<feature type="chain" id="PRO_0000046565" description="Low molecular weight phosphotyrosine protein phosphatase">
    <location>
        <begin position="1"/>
        <end position="161"/>
    </location>
</feature>
<feature type="active site" description="Nucleophile" evidence="1 7">
    <location>
        <position position="14"/>
    </location>
</feature>
<feature type="active site" description="Transition state stabilizer" evidence="1 7">
    <location>
        <position position="20"/>
    </location>
</feature>
<feature type="active site" description="Proton donor" evidence="1 7">
    <location>
        <position position="133"/>
    </location>
</feature>
<feature type="site" description="Important for catalytic activity" evidence="1 7">
    <location>
        <position position="21"/>
    </location>
</feature>
<feature type="modified residue" description="Phosphoserine" evidence="9">
    <location>
        <position position="57"/>
    </location>
</feature>
<feature type="strand" evidence="11">
    <location>
        <begin position="8"/>
        <end position="19"/>
    </location>
</feature>
<feature type="helix" evidence="11">
    <location>
        <begin position="20"/>
        <end position="34"/>
    </location>
</feature>
<feature type="helix" evidence="11">
    <location>
        <begin position="38"/>
        <end position="40"/>
    </location>
</feature>
<feature type="strand" evidence="11">
    <location>
        <begin position="41"/>
        <end position="50"/>
    </location>
</feature>
<feature type="turn" evidence="10">
    <location>
        <begin position="52"/>
        <end position="55"/>
    </location>
</feature>
<feature type="helix" evidence="11">
    <location>
        <begin position="60"/>
        <end position="68"/>
    </location>
</feature>
<feature type="helix" evidence="11">
    <location>
        <begin position="82"/>
        <end position="86"/>
    </location>
</feature>
<feature type="strand" evidence="11">
    <location>
        <begin position="89"/>
        <end position="95"/>
    </location>
</feature>
<feature type="helix" evidence="11">
    <location>
        <begin position="96"/>
        <end position="105"/>
    </location>
</feature>
<feature type="strand" evidence="11">
    <location>
        <begin position="113"/>
        <end position="116"/>
    </location>
</feature>
<feature type="helix" evidence="11">
    <location>
        <begin position="117"/>
        <end position="120"/>
    </location>
</feature>
<feature type="strand" evidence="11">
    <location>
        <begin position="124"/>
        <end position="127"/>
    </location>
</feature>
<feature type="helix" evidence="11">
    <location>
        <begin position="139"/>
        <end position="160"/>
    </location>
</feature>
<gene>
    <name evidence="4" type="primary">LTP1</name>
    <name type="ordered locus">YPR073C</name>
    <name type="ORF">YP9499.28C</name>
</gene>
<keyword id="KW-0002">3D-structure</keyword>
<keyword id="KW-0963">Cytoplasm</keyword>
<keyword id="KW-0378">Hydrolase</keyword>
<keyword id="KW-0597">Phosphoprotein</keyword>
<keyword id="KW-0904">Protein phosphatase</keyword>
<keyword id="KW-1185">Reference proteome</keyword>
<sequence length="161" mass="18675">MTIEKPKISVAFICLGNFCRSPMAEAIFKHEVEKANLENRFNKIDSFGTSNYHVGESPDHRTVSICKQHGVKINHKGKQIKTKHFDEYDYIIGMDESNINNLKKIQPEGSKAKVCLFGDWNTNDGTVQTIIEDPWYGDIQDFEYNFKQITYFSKQFLKKEL</sequence>
<dbReference type="EC" id="3.1.3.48" evidence="3"/>
<dbReference type="EC" id="3.1.3.2" evidence="3"/>
<dbReference type="EMBL" id="U11057">
    <property type="protein sequence ID" value="AAA99546.1"/>
    <property type="molecule type" value="mRNA"/>
</dbReference>
<dbReference type="EMBL" id="L48604">
    <property type="protein sequence ID" value="AAA80146.1"/>
    <property type="molecule type" value="Genomic_DNA"/>
</dbReference>
<dbReference type="EMBL" id="Z49219">
    <property type="protein sequence ID" value="CAA89190.1"/>
    <property type="molecule type" value="Genomic_DNA"/>
</dbReference>
<dbReference type="EMBL" id="Z71255">
    <property type="protein sequence ID" value="CAA94981.1"/>
    <property type="molecule type" value="Genomic_DNA"/>
</dbReference>
<dbReference type="EMBL" id="U51033">
    <property type="protein sequence ID" value="AAB68124.1"/>
    <property type="molecule type" value="Genomic_DNA"/>
</dbReference>
<dbReference type="EMBL" id="AY692891">
    <property type="protein sequence ID" value="AAT92910.1"/>
    <property type="molecule type" value="Genomic_DNA"/>
</dbReference>
<dbReference type="EMBL" id="BK006949">
    <property type="protein sequence ID" value="DAA11493.1"/>
    <property type="molecule type" value="Genomic_DNA"/>
</dbReference>
<dbReference type="PIR" id="A57390">
    <property type="entry name" value="A57390"/>
</dbReference>
<dbReference type="RefSeq" id="NP_015398.1">
    <property type="nucleotide sequence ID" value="NM_001184170.1"/>
</dbReference>
<dbReference type="PDB" id="1D1P">
    <property type="method" value="X-ray"/>
    <property type="resolution" value="2.20 A"/>
    <property type="chains" value="A/B=2-161"/>
</dbReference>
<dbReference type="PDB" id="1D1Q">
    <property type="method" value="X-ray"/>
    <property type="resolution" value="1.70 A"/>
    <property type="chains" value="A/B=1-161"/>
</dbReference>
<dbReference type="PDB" id="1D2A">
    <property type="method" value="X-ray"/>
    <property type="resolution" value="1.90 A"/>
    <property type="chains" value="A/B=2-161"/>
</dbReference>
<dbReference type="PDBsum" id="1D1P"/>
<dbReference type="PDBsum" id="1D1Q"/>
<dbReference type="PDBsum" id="1D2A"/>
<dbReference type="SMR" id="P40347"/>
<dbReference type="BioGRID" id="36246">
    <property type="interactions" value="80"/>
</dbReference>
<dbReference type="DIP" id="DIP-6559N"/>
<dbReference type="FunCoup" id="P40347">
    <property type="interactions" value="699"/>
</dbReference>
<dbReference type="IntAct" id="P40347">
    <property type="interactions" value="1"/>
</dbReference>
<dbReference type="STRING" id="4932.YPR073C"/>
<dbReference type="BindingDB" id="P40347"/>
<dbReference type="ChEMBL" id="CHEMBL5397"/>
<dbReference type="iPTMnet" id="P40347"/>
<dbReference type="PaxDb" id="4932-YPR073C"/>
<dbReference type="PeptideAtlas" id="P40347"/>
<dbReference type="EnsemblFungi" id="YPR073C_mRNA">
    <property type="protein sequence ID" value="YPR073C"/>
    <property type="gene ID" value="YPR073C"/>
</dbReference>
<dbReference type="GeneID" id="856187"/>
<dbReference type="KEGG" id="sce:YPR073C"/>
<dbReference type="AGR" id="SGD:S000006277"/>
<dbReference type="SGD" id="S000006277">
    <property type="gene designation" value="LTP1"/>
</dbReference>
<dbReference type="VEuPathDB" id="FungiDB:YPR073C"/>
<dbReference type="eggNOG" id="KOG3217">
    <property type="taxonomic scope" value="Eukaryota"/>
</dbReference>
<dbReference type="GeneTree" id="ENSGT00940000167505"/>
<dbReference type="HOGENOM" id="CLU_071415_2_0_1"/>
<dbReference type="InParanoid" id="P40347"/>
<dbReference type="OMA" id="VCHGNIC"/>
<dbReference type="OrthoDB" id="3388at2759"/>
<dbReference type="BioCyc" id="YEAST:G3O-34220-MONOMER"/>
<dbReference type="BRENDA" id="3.1.3.48">
    <property type="organism ID" value="984"/>
</dbReference>
<dbReference type="BioGRID-ORCS" id="856187">
    <property type="hits" value="5 hits in 10 CRISPR screens"/>
</dbReference>
<dbReference type="EvolutionaryTrace" id="P40347"/>
<dbReference type="PRO" id="PR:P40347"/>
<dbReference type="Proteomes" id="UP000002311">
    <property type="component" value="Chromosome XVI"/>
</dbReference>
<dbReference type="RNAct" id="P40347">
    <property type="molecule type" value="protein"/>
</dbReference>
<dbReference type="GO" id="GO:0005737">
    <property type="term" value="C:cytoplasm"/>
    <property type="evidence" value="ECO:0007005"/>
    <property type="project" value="SGD"/>
</dbReference>
<dbReference type="GO" id="GO:0005634">
    <property type="term" value="C:nucleus"/>
    <property type="evidence" value="ECO:0007005"/>
    <property type="project" value="SGD"/>
</dbReference>
<dbReference type="GO" id="GO:0003993">
    <property type="term" value="F:acid phosphatase activity"/>
    <property type="evidence" value="ECO:0007669"/>
    <property type="project" value="UniProtKB-EC"/>
</dbReference>
<dbReference type="GO" id="GO:0004725">
    <property type="term" value="F:protein tyrosine phosphatase activity"/>
    <property type="evidence" value="ECO:0000314"/>
    <property type="project" value="SGD"/>
</dbReference>
<dbReference type="CDD" id="cd00115">
    <property type="entry name" value="LMWP"/>
    <property type="match status" value="1"/>
</dbReference>
<dbReference type="FunFam" id="3.40.50.2300:FF:000105">
    <property type="entry name" value="Low molecular weight phosphotyrosine protein"/>
    <property type="match status" value="1"/>
</dbReference>
<dbReference type="Gene3D" id="3.40.50.2300">
    <property type="match status" value="1"/>
</dbReference>
<dbReference type="InterPro" id="IPR050438">
    <property type="entry name" value="LMW_PTPase"/>
</dbReference>
<dbReference type="InterPro" id="IPR023485">
    <property type="entry name" value="Ptyr_pPase"/>
</dbReference>
<dbReference type="InterPro" id="IPR036196">
    <property type="entry name" value="Ptyr_pPase_sf"/>
</dbReference>
<dbReference type="InterPro" id="IPR017867">
    <property type="entry name" value="Tyr_phospatase_low_mol_wt"/>
</dbReference>
<dbReference type="PANTHER" id="PTHR11717:SF7">
    <property type="entry name" value="LOW MOLECULAR WEIGHT PHOSPHOTYROSINE PROTEIN PHOSPHATASE"/>
    <property type="match status" value="1"/>
</dbReference>
<dbReference type="PANTHER" id="PTHR11717">
    <property type="entry name" value="LOW MOLECULAR WEIGHT PROTEIN TYROSINE PHOSPHATASE"/>
    <property type="match status" value="1"/>
</dbReference>
<dbReference type="Pfam" id="PF01451">
    <property type="entry name" value="LMWPc"/>
    <property type="match status" value="1"/>
</dbReference>
<dbReference type="PRINTS" id="PR00719">
    <property type="entry name" value="LMWPTPASE"/>
</dbReference>
<dbReference type="SMART" id="SM00226">
    <property type="entry name" value="LMWPc"/>
    <property type="match status" value="1"/>
</dbReference>
<dbReference type="SUPFAM" id="SSF52788">
    <property type="entry name" value="Phosphotyrosine protein phosphatases I"/>
    <property type="match status" value="1"/>
</dbReference>
<evidence type="ECO:0000269" key="1">
    <source>
    </source>
</evidence>
<evidence type="ECO:0000269" key="2">
    <source>
    </source>
</evidence>
<evidence type="ECO:0000269" key="3">
    <source>
    </source>
</evidence>
<evidence type="ECO:0000303" key="4">
    <source>
    </source>
</evidence>
<evidence type="ECO:0000305" key="5"/>
<evidence type="ECO:0007744" key="6">
    <source>
        <dbReference type="PDB" id="1D1P"/>
    </source>
</evidence>
<evidence type="ECO:0007744" key="7">
    <source>
        <dbReference type="PDB" id="1D1Q"/>
    </source>
</evidence>
<evidence type="ECO:0007744" key="8">
    <source>
        <dbReference type="PDB" id="1D2A"/>
    </source>
</evidence>
<evidence type="ECO:0007744" key="9">
    <source>
    </source>
</evidence>
<evidence type="ECO:0007829" key="10">
    <source>
        <dbReference type="PDB" id="1D1P"/>
    </source>
</evidence>
<evidence type="ECO:0007829" key="11">
    <source>
        <dbReference type="PDB" id="1D1Q"/>
    </source>
</evidence>
<proteinExistence type="evidence at protein level"/>
<accession>P40347</accession>
<accession>D6W477</accession>
<organism>
    <name type="scientific">Saccharomyces cerevisiae (strain ATCC 204508 / S288c)</name>
    <name type="common">Baker's yeast</name>
    <dbReference type="NCBI Taxonomy" id="559292"/>
    <lineage>
        <taxon>Eukaryota</taxon>
        <taxon>Fungi</taxon>
        <taxon>Dikarya</taxon>
        <taxon>Ascomycota</taxon>
        <taxon>Saccharomycotina</taxon>
        <taxon>Saccharomycetes</taxon>
        <taxon>Saccharomycetales</taxon>
        <taxon>Saccharomycetaceae</taxon>
        <taxon>Saccharomyces</taxon>
    </lineage>
</organism>
<comment type="function">
    <text evidence="3">Acts on tyrosine phosphorylated proteins, low-MW aryl phosphates and natural and synthetic acyl phosphates.</text>
</comment>
<comment type="catalytic activity">
    <reaction evidence="3">
        <text>O-phospho-L-tyrosyl-[protein] + H2O = L-tyrosyl-[protein] + phosphate</text>
        <dbReference type="Rhea" id="RHEA:10684"/>
        <dbReference type="Rhea" id="RHEA-COMP:10136"/>
        <dbReference type="Rhea" id="RHEA-COMP:20101"/>
        <dbReference type="ChEBI" id="CHEBI:15377"/>
        <dbReference type="ChEBI" id="CHEBI:43474"/>
        <dbReference type="ChEBI" id="CHEBI:46858"/>
        <dbReference type="ChEBI" id="CHEBI:61978"/>
        <dbReference type="EC" id="3.1.3.48"/>
    </reaction>
</comment>
<comment type="catalytic activity">
    <reaction evidence="3">
        <text>a phosphate monoester + H2O = an alcohol + phosphate</text>
        <dbReference type="Rhea" id="RHEA:15017"/>
        <dbReference type="ChEBI" id="CHEBI:15377"/>
        <dbReference type="ChEBI" id="CHEBI:30879"/>
        <dbReference type="ChEBI" id="CHEBI:43474"/>
        <dbReference type="ChEBI" id="CHEBI:67140"/>
        <dbReference type="EC" id="3.1.3.2"/>
    </reaction>
</comment>
<comment type="subcellular location">
    <subcellularLocation>
        <location evidence="3">Cytoplasm</location>
    </subcellularLocation>
</comment>
<comment type="miscellaneous">
    <text evidence="2">Present with 3500 molecules/cell in log phase SD medium.</text>
</comment>
<comment type="similarity">
    <text evidence="5">Belongs to the low molecular weight phosphotyrosine protein phosphatase family.</text>
</comment>
<reference key="1">
    <citation type="journal article" date="1995" name="J. Biol. Chem.">
        <title>Cloning and characterization of a Saccharomyces cerevisiae gene encoding the low molecular weight protein-tyrosine phosphatase.</title>
        <authorList>
            <person name="Ostanin K."/>
            <person name="Pokalsky C."/>
            <person name="Wang S."/>
            <person name="van Etten R.L."/>
        </authorList>
    </citation>
    <scope>NUCLEOTIDE SEQUENCE [GENOMIC DNA / MRNA]</scope>
    <scope>FUNCTION</scope>
    <scope>CATALYTIC ACTIVITY</scope>
    <scope>SUBCELLULAR LOCATION</scope>
    <source>
        <strain>Y133</strain>
    </source>
</reference>
<reference key="2">
    <citation type="journal article" date="1997" name="Nature">
        <title>The nucleotide sequence of Saccharomyces cerevisiae chromosome XVI.</title>
        <authorList>
            <person name="Bussey H."/>
            <person name="Storms R.K."/>
            <person name="Ahmed A."/>
            <person name="Albermann K."/>
            <person name="Allen E."/>
            <person name="Ansorge W."/>
            <person name="Araujo R."/>
            <person name="Aparicio A."/>
            <person name="Barrell B.G."/>
            <person name="Badcock K."/>
            <person name="Benes V."/>
            <person name="Botstein D."/>
            <person name="Bowman S."/>
            <person name="Brueckner M."/>
            <person name="Carpenter J."/>
            <person name="Cherry J.M."/>
            <person name="Chung E."/>
            <person name="Churcher C.M."/>
            <person name="Coster F."/>
            <person name="Davis K."/>
            <person name="Davis R.W."/>
            <person name="Dietrich F.S."/>
            <person name="Delius H."/>
            <person name="DiPaolo T."/>
            <person name="Dubois E."/>
            <person name="Duesterhoeft A."/>
            <person name="Duncan M."/>
            <person name="Floeth M."/>
            <person name="Fortin N."/>
            <person name="Friesen J.D."/>
            <person name="Fritz C."/>
            <person name="Goffeau A."/>
            <person name="Hall J."/>
            <person name="Hebling U."/>
            <person name="Heumann K."/>
            <person name="Hilbert H."/>
            <person name="Hillier L.W."/>
            <person name="Hunicke-Smith S."/>
            <person name="Hyman R.W."/>
            <person name="Johnston M."/>
            <person name="Kalman S."/>
            <person name="Kleine K."/>
            <person name="Komp C."/>
            <person name="Kurdi O."/>
            <person name="Lashkari D."/>
            <person name="Lew H."/>
            <person name="Lin A."/>
            <person name="Lin D."/>
            <person name="Louis E.J."/>
            <person name="Marathe R."/>
            <person name="Messenguy F."/>
            <person name="Mewes H.-W."/>
            <person name="Mirtipati S."/>
            <person name="Moestl D."/>
            <person name="Mueller-Auer S."/>
            <person name="Namath A."/>
            <person name="Nentwich U."/>
            <person name="Oefner P."/>
            <person name="Pearson D."/>
            <person name="Petel F.X."/>
            <person name="Pohl T.M."/>
            <person name="Purnelle B."/>
            <person name="Rajandream M.A."/>
            <person name="Rechmann S."/>
            <person name="Rieger M."/>
            <person name="Riles L."/>
            <person name="Roberts D."/>
            <person name="Schaefer M."/>
            <person name="Scharfe M."/>
            <person name="Scherens B."/>
            <person name="Schramm S."/>
            <person name="Schroeder M."/>
            <person name="Sdicu A.-M."/>
            <person name="Tettelin H."/>
            <person name="Urrestarazu L.A."/>
            <person name="Ushinsky S."/>
            <person name="Vierendeels F."/>
            <person name="Vissers S."/>
            <person name="Voss H."/>
            <person name="Walsh S.V."/>
            <person name="Wambutt R."/>
            <person name="Wang Y."/>
            <person name="Wedler E."/>
            <person name="Wedler H."/>
            <person name="Winnett E."/>
            <person name="Zhong W.-W."/>
            <person name="Zollner A."/>
            <person name="Vo D.H."/>
            <person name="Hani J."/>
        </authorList>
    </citation>
    <scope>NUCLEOTIDE SEQUENCE [LARGE SCALE GENOMIC DNA]</scope>
    <source>
        <strain>ATCC 204508 / S288c</strain>
    </source>
</reference>
<reference key="3">
    <citation type="journal article" date="2014" name="G3 (Bethesda)">
        <title>The reference genome sequence of Saccharomyces cerevisiae: Then and now.</title>
        <authorList>
            <person name="Engel S.R."/>
            <person name="Dietrich F.S."/>
            <person name="Fisk D.G."/>
            <person name="Binkley G."/>
            <person name="Balakrishnan R."/>
            <person name="Costanzo M.C."/>
            <person name="Dwight S.S."/>
            <person name="Hitz B.C."/>
            <person name="Karra K."/>
            <person name="Nash R.S."/>
            <person name="Weng S."/>
            <person name="Wong E.D."/>
            <person name="Lloyd P."/>
            <person name="Skrzypek M.S."/>
            <person name="Miyasato S.R."/>
            <person name="Simison M."/>
            <person name="Cherry J.M."/>
        </authorList>
    </citation>
    <scope>GENOME REANNOTATION</scope>
    <source>
        <strain>ATCC 204508 / S288c</strain>
    </source>
</reference>
<reference key="4">
    <citation type="journal article" date="2007" name="Genome Res.">
        <title>Approaching a complete repository of sequence-verified protein-encoding clones for Saccharomyces cerevisiae.</title>
        <authorList>
            <person name="Hu Y."/>
            <person name="Rolfs A."/>
            <person name="Bhullar B."/>
            <person name="Murthy T.V.S."/>
            <person name="Zhu C."/>
            <person name="Berger M.F."/>
            <person name="Camargo A.A."/>
            <person name="Kelley F."/>
            <person name="McCarron S."/>
            <person name="Jepson D."/>
            <person name="Richardson A."/>
            <person name="Raphael J."/>
            <person name="Moreira D."/>
            <person name="Taycher E."/>
            <person name="Zuo D."/>
            <person name="Mohr S."/>
            <person name="Kane M.F."/>
            <person name="Williamson J."/>
            <person name="Simpson A.J.G."/>
            <person name="Bulyk M.L."/>
            <person name="Harlow E."/>
            <person name="Marsischky G."/>
            <person name="Kolodner R.D."/>
            <person name="LaBaer J."/>
        </authorList>
    </citation>
    <scope>NUCLEOTIDE SEQUENCE [GENOMIC DNA]</scope>
    <source>
        <strain>ATCC 204508 / S288c</strain>
    </source>
</reference>
<reference key="5">
    <citation type="journal article" date="2003" name="Nature">
        <title>Global analysis of protein expression in yeast.</title>
        <authorList>
            <person name="Ghaemmaghami S."/>
            <person name="Huh W.-K."/>
            <person name="Bower K."/>
            <person name="Howson R.W."/>
            <person name="Belle A."/>
            <person name="Dephoure N."/>
            <person name="O'Shea E.K."/>
            <person name="Weissman J.S."/>
        </authorList>
    </citation>
    <scope>LEVEL OF PROTEIN EXPRESSION [LARGE SCALE ANALYSIS]</scope>
</reference>
<reference key="6">
    <citation type="journal article" date="2008" name="Mol. Cell. Proteomics">
        <title>A multidimensional chromatography technology for in-depth phosphoproteome analysis.</title>
        <authorList>
            <person name="Albuquerque C.P."/>
            <person name="Smolka M.B."/>
            <person name="Payne S.H."/>
            <person name="Bafna V."/>
            <person name="Eng J."/>
            <person name="Zhou H."/>
        </authorList>
    </citation>
    <scope>PHOSPHORYLATION [LARGE SCALE ANALYSIS] AT SER-57</scope>
    <scope>IDENTIFICATION BY MASS SPECTROMETRY [LARGE SCALE ANALYSIS]</scope>
</reference>
<reference evidence="8" key="7">
    <citation type="journal article" date="2000" name="Biochemistry">
        <title>Structural and mechanistic basis for the activation of a low-molecular weight protein tyrosine phosphatase by adenine.</title>
        <authorList>
            <person name="Wang S."/>
            <person name="Stauffacher C.V."/>
            <person name="Van Etten R.L."/>
        </authorList>
    </citation>
    <scope>X-RAY CRYSTALLOGRAPHY (1.90 ANGSTROMS) OF 2-161</scope>
</reference>
<reference evidence="6 7" key="8">
    <citation type="journal article" date="2000" name="Biochemistry">
        <title>Crystal structures of a low-molecular weight protein tyrosine phosphatase from Saccharomyces cerevisiae and its complex with the substrate p-nitrophenyl phosphate.</title>
        <authorList>
            <person name="Wang S."/>
            <person name="Tabernero L."/>
            <person name="Zhang M."/>
            <person name="Harms E."/>
            <person name="Van Etten R.L."/>
            <person name="Stauffacher C.V."/>
        </authorList>
    </citation>
    <scope>X-RAY CRYSTALLOGRAPHY (1.70 ANGSTROMS)</scope>
    <scope>ACTIVE SITE</scope>
</reference>